<name>BRK_PARID</name>
<keyword id="KW-1222">Bradykinin receptor impairing toxin</keyword>
<keyword id="KW-0903">Direct protein sequencing</keyword>
<keyword id="KW-1213">G-protein coupled receptor impairing toxin</keyword>
<keyword id="KW-0382">Hypotensive agent</keyword>
<keyword id="KW-0873">Pyrrolidone carboxylic acid</keyword>
<keyword id="KW-0964">Secreted</keyword>
<keyword id="KW-0800">Toxin</keyword>
<keyword id="KW-0838">Vasoactive</keyword>
<keyword id="KW-0840">Vasodilator</keyword>
<proteinExistence type="evidence at protein level"/>
<accession>P42717</accession>
<comment type="function">
    <text evidence="1">Induces smooth muscle contraction. May target bradykinin receptors (BDKRB). May cause hypotension.</text>
</comment>
<comment type="subcellular location">
    <subcellularLocation>
        <location evidence="1">Secreted</location>
    </subcellularLocation>
</comment>
<comment type="tissue specificity">
    <text evidence="4">Expressed by the venom gland.</text>
</comment>
<comment type="similarity">
    <text evidence="3">Belongs to the bradykinin-related peptide family.</text>
</comment>
<evidence type="ECO:0000269" key="1">
    <source ref="1"/>
</evidence>
<evidence type="ECO:0000303" key="2">
    <source ref="1"/>
</evidence>
<evidence type="ECO:0000305" key="3"/>
<evidence type="ECO:0000305" key="4">
    <source ref="1"/>
</evidence>
<organism>
    <name type="scientific">Parapolybia indica</name>
    <name type="common">Lesser paper wasp</name>
    <dbReference type="NCBI Taxonomy" id="31921"/>
    <lineage>
        <taxon>Eukaryota</taxon>
        <taxon>Metazoa</taxon>
        <taxon>Ecdysozoa</taxon>
        <taxon>Arthropoda</taxon>
        <taxon>Hexapoda</taxon>
        <taxon>Insecta</taxon>
        <taxon>Pterygota</taxon>
        <taxon>Neoptera</taxon>
        <taxon>Endopterygota</taxon>
        <taxon>Hymenoptera</taxon>
        <taxon>Apocrita</taxon>
        <taxon>Aculeata</taxon>
        <taxon>Vespoidea</taxon>
        <taxon>Vespidae</taxon>
        <taxon>Polistinae</taxon>
        <taxon>Ropalidiini</taxon>
        <taxon>Parapolybia</taxon>
    </lineage>
</organism>
<reference key="1">
    <citation type="journal article" date="1988" name="Eisei Dobutsu">
        <title>Isolation and sequential analysis of peptides on the venom sac of Parapolybia indica.</title>
        <authorList>
            <person name="Toki T."/>
            <person name="Yasuhara T."/>
            <person name="Nakajima T."/>
        </authorList>
    </citation>
    <scope>PROTEIN SEQUENCE</scope>
    <scope>SUBCELLULAR LOCATION</scope>
    <scope>PYROGLUTAMATE FORMATION AT GLN-1</scope>
    <source>
        <tissue>Venom</tissue>
    </source>
</reference>
<dbReference type="GO" id="GO:0005576">
    <property type="term" value="C:extracellular region"/>
    <property type="evidence" value="ECO:0007669"/>
    <property type="project" value="UniProtKB-SubCell"/>
</dbReference>
<dbReference type="GO" id="GO:0005179">
    <property type="term" value="F:hormone activity"/>
    <property type="evidence" value="ECO:0007669"/>
    <property type="project" value="InterPro"/>
</dbReference>
<dbReference type="GO" id="GO:0090729">
    <property type="term" value="F:toxin activity"/>
    <property type="evidence" value="ECO:0007669"/>
    <property type="project" value="UniProtKB-KW"/>
</dbReference>
<dbReference type="GO" id="GO:0006952">
    <property type="term" value="P:defense response"/>
    <property type="evidence" value="ECO:0007669"/>
    <property type="project" value="InterPro"/>
</dbReference>
<dbReference type="GO" id="GO:0008217">
    <property type="term" value="P:regulation of blood pressure"/>
    <property type="evidence" value="ECO:0007669"/>
    <property type="project" value="UniProtKB-KW"/>
</dbReference>
<dbReference type="GO" id="GO:0042311">
    <property type="term" value="P:vasodilation"/>
    <property type="evidence" value="ECO:0007669"/>
    <property type="project" value="UniProtKB-KW"/>
</dbReference>
<dbReference type="InterPro" id="IPR009608">
    <property type="entry name" value="Bradykinin"/>
</dbReference>
<dbReference type="Pfam" id="PF06753">
    <property type="entry name" value="Bradykinin"/>
    <property type="match status" value="1"/>
</dbReference>
<protein>
    <recommendedName>
        <fullName evidence="2">Waspkinin</fullName>
    </recommendedName>
    <alternativeName>
        <fullName evidence="3">Bradykinin-related peptide</fullName>
    </alternativeName>
</protein>
<sequence>QZKRPPGFSPFRK</sequence>
<feature type="peptide" id="PRO_0000043516" description="Waspkinin" evidence="1">
    <location>
        <begin position="1"/>
        <end position="13"/>
    </location>
</feature>
<feature type="modified residue" description="Pyrrolidone carboxylic acid" evidence="1">
    <location>
        <position position="1"/>
    </location>
</feature>